<feature type="chain" id="PRO_0000222937" description="RNA replicase polyprotein">
    <location>
        <begin position="1" status="less than"/>
        <end position="178"/>
    </location>
</feature>
<feature type="non-terminal residue">
    <location>
        <position position="1"/>
    </location>
</feature>
<reference key="1">
    <citation type="journal article" date="1992" name="Arch. Virol.">
        <title>Nucleotide sequence of the 3' terminal region of belladonna mottle virus-Iowa (renamed Physalis mottle virus) RNA and an analysis of the relationships of tymoviral coat proteins.</title>
        <authorList>
            <person name="Jacob A.N.K."/>
            <person name="Murthy M.R."/>
            <person name="Savithri H.S."/>
        </authorList>
    </citation>
    <scope>NUCLEOTIDE SEQUENCE [GENOMIC RNA]</scope>
</reference>
<proteinExistence type="inferred from homology"/>
<comment type="catalytic activity">
    <reaction>
        <text>RNA(n) + a ribonucleoside 5'-triphosphate = RNA(n+1) + diphosphate</text>
        <dbReference type="Rhea" id="RHEA:21248"/>
        <dbReference type="Rhea" id="RHEA-COMP:14527"/>
        <dbReference type="Rhea" id="RHEA-COMP:17342"/>
        <dbReference type="ChEBI" id="CHEBI:33019"/>
        <dbReference type="ChEBI" id="CHEBI:61557"/>
        <dbReference type="ChEBI" id="CHEBI:140395"/>
        <dbReference type="EC" id="2.7.7.48"/>
    </reaction>
</comment>
<comment type="similarity">
    <text evidence="1">Belongs to the tymovirus NS35 RNA replicase polyprotein family.</text>
</comment>
<evidence type="ECO:0000305" key="1"/>
<protein>
    <recommendedName>
        <fullName>RNA replicase polyprotein</fullName>
        <ecNumber>2.7.7.48</ecNumber>
    </recommendedName>
</protein>
<organismHost>
    <name type="scientific">Physalis heterophylla</name>
    <dbReference type="NCBI Taxonomy" id="304155"/>
</organismHost>
<keyword id="KW-0067">ATP-binding</keyword>
<keyword id="KW-0547">Nucleotide-binding</keyword>
<keyword id="KW-0548">Nucleotidyltransferase</keyword>
<keyword id="KW-0696">RNA-directed RNA polymerase</keyword>
<keyword id="KW-0808">Transferase</keyword>
<sequence length="178" mass="19963">VIVGTPPISPNWPAIKDLLHLKFKTEITSSPLFCGYYLSPAGCIRNPLAHFAKLMTCVDDMSLPEKVLSYLSEVSIGHNLGDQIIQHLPPHLIQYQSACFDFFCRNCTPSQKLLLSNDPIPESKLLALVHKIKWASKAFFSELPQKAREFLVSKSSLPSFPNNPKVSELESELLHFSQ</sequence>
<dbReference type="EC" id="2.7.7.48"/>
<dbReference type="EMBL" id="S97776">
    <property type="protein sequence ID" value="AAB21996.1"/>
    <property type="molecule type" value="Genomic_RNA"/>
</dbReference>
<dbReference type="PIR" id="A45540">
    <property type="entry name" value="A45540"/>
</dbReference>
<dbReference type="GO" id="GO:0005524">
    <property type="term" value="F:ATP binding"/>
    <property type="evidence" value="ECO:0007669"/>
    <property type="project" value="UniProtKB-KW"/>
</dbReference>
<dbReference type="GO" id="GO:0003968">
    <property type="term" value="F:RNA-directed RNA polymerase activity"/>
    <property type="evidence" value="ECO:0007669"/>
    <property type="project" value="UniProtKB-KW"/>
</dbReference>
<dbReference type="InterPro" id="IPR043502">
    <property type="entry name" value="DNA/RNA_pol_sf"/>
</dbReference>
<dbReference type="SUPFAM" id="SSF56672">
    <property type="entry name" value="DNA/RNA polymerases"/>
    <property type="match status" value="1"/>
</dbReference>
<accession>P36352</accession>
<name>POLR_PHMV</name>
<organism>
    <name type="scientific">Physalis mottle virus</name>
    <name type="common">PhMV</name>
    <name type="synonym">Belladonna mottle virus-Iowa</name>
    <dbReference type="NCBI Taxonomy" id="72539"/>
    <lineage>
        <taxon>Viruses</taxon>
        <taxon>Riboviria</taxon>
        <taxon>Orthornavirae</taxon>
        <taxon>Kitrinoviricota</taxon>
        <taxon>Alsuviricetes</taxon>
        <taxon>Tymovirales</taxon>
        <taxon>Tymoviridae</taxon>
        <taxon>Tymovirus</taxon>
        <taxon>Tymovirus physalis</taxon>
    </lineage>
</organism>